<comment type="function">
    <text evidence="1">One of the primary rRNA binding proteins, it binds directly near the 3'-end of the 23S rRNA, where it nucleates assembly of the 50S subunit.</text>
</comment>
<comment type="subunit">
    <text evidence="1">Part of the 50S ribosomal subunit. Forms a cluster with proteins L14 and L19.</text>
</comment>
<comment type="PTM">
    <text evidence="1">Methylated by PrmB.</text>
</comment>
<comment type="similarity">
    <text evidence="1">Belongs to the universal ribosomal protein uL3 family.</text>
</comment>
<proteinExistence type="inferred from homology"/>
<evidence type="ECO:0000255" key="1">
    <source>
        <dbReference type="HAMAP-Rule" id="MF_01325"/>
    </source>
</evidence>
<evidence type="ECO:0000305" key="2"/>
<keyword id="KW-0488">Methylation</keyword>
<keyword id="KW-1185">Reference proteome</keyword>
<keyword id="KW-0687">Ribonucleoprotein</keyword>
<keyword id="KW-0689">Ribosomal protein</keyword>
<keyword id="KW-0694">RNA-binding</keyword>
<keyword id="KW-0699">rRNA-binding</keyword>
<name>RL3_ACICJ</name>
<feature type="chain" id="PRO_0000353589" description="Large ribosomal subunit protein uL3">
    <location>
        <begin position="1"/>
        <end position="227"/>
    </location>
</feature>
<feature type="modified residue" description="N5-methylglutamine" evidence="1">
    <location>
        <position position="154"/>
    </location>
</feature>
<dbReference type="EMBL" id="CP000697">
    <property type="protein sequence ID" value="ABQ31147.1"/>
    <property type="molecule type" value="Genomic_DNA"/>
</dbReference>
<dbReference type="SMR" id="A5FZW5"/>
<dbReference type="STRING" id="349163.Acry_1946"/>
<dbReference type="KEGG" id="acr:Acry_1946"/>
<dbReference type="eggNOG" id="COG0087">
    <property type="taxonomic scope" value="Bacteria"/>
</dbReference>
<dbReference type="HOGENOM" id="CLU_044142_2_0_5"/>
<dbReference type="Proteomes" id="UP000000245">
    <property type="component" value="Chromosome"/>
</dbReference>
<dbReference type="GO" id="GO:0022625">
    <property type="term" value="C:cytosolic large ribosomal subunit"/>
    <property type="evidence" value="ECO:0007669"/>
    <property type="project" value="TreeGrafter"/>
</dbReference>
<dbReference type="GO" id="GO:0019843">
    <property type="term" value="F:rRNA binding"/>
    <property type="evidence" value="ECO:0007669"/>
    <property type="project" value="UniProtKB-UniRule"/>
</dbReference>
<dbReference type="GO" id="GO:0003735">
    <property type="term" value="F:structural constituent of ribosome"/>
    <property type="evidence" value="ECO:0007669"/>
    <property type="project" value="InterPro"/>
</dbReference>
<dbReference type="GO" id="GO:0006412">
    <property type="term" value="P:translation"/>
    <property type="evidence" value="ECO:0007669"/>
    <property type="project" value="UniProtKB-UniRule"/>
</dbReference>
<dbReference type="FunFam" id="2.40.30.10:FF:000004">
    <property type="entry name" value="50S ribosomal protein L3"/>
    <property type="match status" value="1"/>
</dbReference>
<dbReference type="FunFam" id="3.30.160.810:FF:000001">
    <property type="entry name" value="50S ribosomal protein L3"/>
    <property type="match status" value="1"/>
</dbReference>
<dbReference type="Gene3D" id="3.30.160.810">
    <property type="match status" value="1"/>
</dbReference>
<dbReference type="Gene3D" id="2.40.30.10">
    <property type="entry name" value="Translation factors"/>
    <property type="match status" value="1"/>
</dbReference>
<dbReference type="HAMAP" id="MF_01325_B">
    <property type="entry name" value="Ribosomal_uL3_B"/>
    <property type="match status" value="1"/>
</dbReference>
<dbReference type="InterPro" id="IPR000597">
    <property type="entry name" value="Ribosomal_uL3"/>
</dbReference>
<dbReference type="InterPro" id="IPR019927">
    <property type="entry name" value="Ribosomal_uL3_bac/org-type"/>
</dbReference>
<dbReference type="InterPro" id="IPR019926">
    <property type="entry name" value="Ribosomal_uL3_CS"/>
</dbReference>
<dbReference type="InterPro" id="IPR009000">
    <property type="entry name" value="Transl_B-barrel_sf"/>
</dbReference>
<dbReference type="NCBIfam" id="TIGR03625">
    <property type="entry name" value="L3_bact"/>
    <property type="match status" value="1"/>
</dbReference>
<dbReference type="PANTHER" id="PTHR11229">
    <property type="entry name" value="50S RIBOSOMAL PROTEIN L3"/>
    <property type="match status" value="1"/>
</dbReference>
<dbReference type="PANTHER" id="PTHR11229:SF16">
    <property type="entry name" value="LARGE RIBOSOMAL SUBUNIT PROTEIN UL3C"/>
    <property type="match status" value="1"/>
</dbReference>
<dbReference type="Pfam" id="PF00297">
    <property type="entry name" value="Ribosomal_L3"/>
    <property type="match status" value="1"/>
</dbReference>
<dbReference type="SUPFAM" id="SSF50447">
    <property type="entry name" value="Translation proteins"/>
    <property type="match status" value="1"/>
</dbReference>
<dbReference type="PROSITE" id="PS00474">
    <property type="entry name" value="RIBOSOMAL_L3"/>
    <property type="match status" value="1"/>
</dbReference>
<organism>
    <name type="scientific">Acidiphilium cryptum (strain JF-5)</name>
    <dbReference type="NCBI Taxonomy" id="349163"/>
    <lineage>
        <taxon>Bacteria</taxon>
        <taxon>Pseudomonadati</taxon>
        <taxon>Pseudomonadota</taxon>
        <taxon>Alphaproteobacteria</taxon>
        <taxon>Acetobacterales</taxon>
        <taxon>Acidocellaceae</taxon>
        <taxon>Acidiphilium</taxon>
    </lineage>
</organism>
<gene>
    <name evidence="1" type="primary">rplC</name>
    <name type="ordered locus">Acry_1946</name>
</gene>
<protein>
    <recommendedName>
        <fullName evidence="1">Large ribosomal subunit protein uL3</fullName>
    </recommendedName>
    <alternativeName>
        <fullName evidence="2">50S ribosomal protein L3</fullName>
    </alternativeName>
</protein>
<reference key="1">
    <citation type="submission" date="2007-05" db="EMBL/GenBank/DDBJ databases">
        <title>Complete sequence of chromosome of Acidiphilium cryptum JF-5.</title>
        <authorList>
            <consortium name="US DOE Joint Genome Institute"/>
            <person name="Copeland A."/>
            <person name="Lucas S."/>
            <person name="Lapidus A."/>
            <person name="Barry K."/>
            <person name="Detter J.C."/>
            <person name="Glavina del Rio T."/>
            <person name="Hammon N."/>
            <person name="Israni S."/>
            <person name="Dalin E."/>
            <person name="Tice H."/>
            <person name="Pitluck S."/>
            <person name="Sims D."/>
            <person name="Brettin T."/>
            <person name="Bruce D."/>
            <person name="Han C."/>
            <person name="Schmutz J."/>
            <person name="Larimer F."/>
            <person name="Land M."/>
            <person name="Hauser L."/>
            <person name="Kyrpides N."/>
            <person name="Kim E."/>
            <person name="Magnuson T."/>
            <person name="Richardson P."/>
        </authorList>
    </citation>
    <scope>NUCLEOTIDE SEQUENCE [LARGE SCALE GENOMIC DNA]</scope>
    <source>
        <strain>JF-5</strain>
    </source>
</reference>
<accession>A5FZW5</accession>
<sequence length="227" mass="24209">MSVMRTGIIAKKLGMTRLFREDGTHVPVTVLHMDDVRVVAARTKERDGYAAVQLGFGHAKTKNVTKPMKGHFAAAKVEPANRLVEFRVADDAVLEAGQVLSAAHFTVGQKVDVAGISKGKGFAGGMKRWNFRGLEASHGVSISHRSLGSTGNRQDPGKTFKNKKMAGHLGGERITTLNLEVAAIDEARNLIMIKGAVPGAKDGYVLVRDAVKTARPADAAYPAALKA</sequence>